<keyword id="KW-0002">3D-structure</keyword>
<keyword id="KW-0131">Cell cycle</keyword>
<keyword id="KW-0132">Cell division</keyword>
<keyword id="KW-1003">Cell membrane</keyword>
<keyword id="KW-0963">Cytoplasm</keyword>
<keyword id="KW-0206">Cytoskeleton</keyword>
<keyword id="KW-0342">GTP-binding</keyword>
<keyword id="KW-0378">Hydrolase</keyword>
<keyword id="KW-0449">Lipoprotein</keyword>
<keyword id="KW-0460">Magnesium</keyword>
<keyword id="KW-0472">Membrane</keyword>
<keyword id="KW-0479">Metal-binding</keyword>
<keyword id="KW-0498">Mitosis</keyword>
<keyword id="KW-0519">Myristate</keyword>
<keyword id="KW-0547">Nucleotide-binding</keyword>
<keyword id="KW-0539">Nucleus</keyword>
<keyword id="KW-0564">Palmitate</keyword>
<keyword id="KW-1185">Reference proteome</keyword>
<keyword id="KW-0807">Transducer</keyword>
<keyword id="KW-0813">Transport</keyword>
<evidence type="ECO:0000250" key="1">
    <source>
        <dbReference type="UniProtKB" id="P10824"/>
    </source>
</evidence>
<evidence type="ECO:0000250" key="2">
    <source>
        <dbReference type="UniProtKB" id="P63096"/>
    </source>
</evidence>
<evidence type="ECO:0000255" key="3">
    <source>
        <dbReference type="PROSITE-ProRule" id="PRU01230"/>
    </source>
</evidence>
<evidence type="ECO:0000305" key="4"/>
<evidence type="ECO:0007829" key="5">
    <source>
        <dbReference type="PDB" id="8FX5"/>
    </source>
</evidence>
<protein>
    <recommendedName>
        <fullName>Guanine nucleotide-binding protein G(i) subunit alpha-1</fullName>
        <ecNumber evidence="2">3.6.5.-</ecNumber>
    </recommendedName>
    <alternativeName>
        <fullName>Adenylate cyclase-inhibiting G alpha protein</fullName>
    </alternativeName>
</protein>
<gene>
    <name type="primary">Gnai1</name>
    <name type="synonym">Gnai-1</name>
</gene>
<name>GNAI1_MOUSE</name>
<dbReference type="EC" id="3.6.5.-" evidence="2"/>
<dbReference type="EMBL" id="BC138862">
    <property type="protein sequence ID" value="AAI38863.1"/>
    <property type="molecule type" value="mRNA"/>
</dbReference>
<dbReference type="EMBL" id="BC138865">
    <property type="protein sequence ID" value="AAI38866.1"/>
    <property type="molecule type" value="mRNA"/>
</dbReference>
<dbReference type="CCDS" id="CCDS39018.1"/>
<dbReference type="RefSeq" id="NP_034435.1">
    <property type="nucleotide sequence ID" value="NM_010305.1"/>
</dbReference>
<dbReference type="PDB" id="7TD0">
    <property type="method" value="EM"/>
    <property type="resolution" value="2.83 A"/>
    <property type="chains" value="A=1-354"/>
</dbReference>
<dbReference type="PDB" id="7TD1">
    <property type="method" value="EM"/>
    <property type="resolution" value="3.08 A"/>
    <property type="chains" value="A=1-354"/>
</dbReference>
<dbReference type="PDB" id="7TD2">
    <property type="method" value="EM"/>
    <property type="resolution" value="3.11 A"/>
    <property type="chains" value="A=1-354"/>
</dbReference>
<dbReference type="PDB" id="7TD3">
    <property type="method" value="EM"/>
    <property type="resolution" value="3.00 A"/>
    <property type="chains" value="A=1-354"/>
</dbReference>
<dbReference type="PDB" id="7TD4">
    <property type="method" value="EM"/>
    <property type="resolution" value="2.60 A"/>
    <property type="chains" value="A=1-354"/>
</dbReference>
<dbReference type="PDB" id="8FX5">
    <property type="method" value="EM"/>
    <property type="resolution" value="2.45 A"/>
    <property type="chains" value="A=1-354"/>
</dbReference>
<dbReference type="PDBsum" id="7TD0"/>
<dbReference type="PDBsum" id="7TD1"/>
<dbReference type="PDBsum" id="7TD2"/>
<dbReference type="PDBsum" id="7TD3"/>
<dbReference type="PDBsum" id="7TD4"/>
<dbReference type="PDBsum" id="8FX5"/>
<dbReference type="EMDB" id="EMD-25819"/>
<dbReference type="EMDB" id="EMD-25820"/>
<dbReference type="EMDB" id="EMD-25821"/>
<dbReference type="EMDB" id="EMD-25822"/>
<dbReference type="EMDB" id="EMD-25823"/>
<dbReference type="EMDB" id="EMD-29524"/>
<dbReference type="SMR" id="B2RSH2"/>
<dbReference type="BioGRID" id="199966">
    <property type="interactions" value="26"/>
</dbReference>
<dbReference type="CORUM" id="B2RSH2"/>
<dbReference type="FunCoup" id="B2RSH2">
    <property type="interactions" value="2159"/>
</dbReference>
<dbReference type="IntAct" id="B2RSH2">
    <property type="interactions" value="3"/>
</dbReference>
<dbReference type="STRING" id="10090.ENSMUSP00000074259"/>
<dbReference type="GlyGen" id="B2RSH2">
    <property type="glycosylation" value="2 sites, 1 O-linked glycan (2 sites)"/>
</dbReference>
<dbReference type="iPTMnet" id="B2RSH2"/>
<dbReference type="MetOSite" id="B2RSH2"/>
<dbReference type="PhosphoSitePlus" id="B2RSH2"/>
<dbReference type="SwissPalm" id="B2RSH2"/>
<dbReference type="jPOST" id="B2RSH2"/>
<dbReference type="PaxDb" id="10090-ENSMUSP00000074259"/>
<dbReference type="PeptideAtlas" id="B2RSH2"/>
<dbReference type="ProteomicsDB" id="271003"/>
<dbReference type="Antibodypedia" id="15099">
    <property type="antibodies" value="305 antibodies from 36 providers"/>
</dbReference>
<dbReference type="DNASU" id="14677"/>
<dbReference type="Ensembl" id="ENSMUST00000074694.7">
    <property type="protein sequence ID" value="ENSMUSP00000074259.6"/>
    <property type="gene ID" value="ENSMUSG00000057614.7"/>
</dbReference>
<dbReference type="GeneID" id="14677"/>
<dbReference type="KEGG" id="mmu:14677"/>
<dbReference type="UCSC" id="uc008wns.1">
    <property type="organism name" value="mouse"/>
</dbReference>
<dbReference type="AGR" id="MGI:95771"/>
<dbReference type="CTD" id="2770"/>
<dbReference type="MGI" id="MGI:95771">
    <property type="gene designation" value="Gnai1"/>
</dbReference>
<dbReference type="VEuPathDB" id="HostDB:ENSMUSG00000057614"/>
<dbReference type="eggNOG" id="KOG0082">
    <property type="taxonomic scope" value="Eukaryota"/>
</dbReference>
<dbReference type="GeneTree" id="ENSGT00940000153567"/>
<dbReference type="HOGENOM" id="CLU_014184_6_0_1"/>
<dbReference type="InParanoid" id="B2RSH2"/>
<dbReference type="OMA" id="QVIWADA"/>
<dbReference type="OrthoDB" id="5817230at2759"/>
<dbReference type="PhylomeDB" id="B2RSH2"/>
<dbReference type="TreeFam" id="TF300673"/>
<dbReference type="Reactome" id="R-MMU-170670">
    <property type="pathway name" value="Adenylate cyclase inhibitory pathway"/>
</dbReference>
<dbReference type="Reactome" id="R-MMU-392170">
    <property type="pathway name" value="ADP signalling through P2Y purinoceptor 12"/>
</dbReference>
<dbReference type="Reactome" id="R-MMU-400042">
    <property type="pathway name" value="Adrenaline,noradrenaline inhibits insulin secretion"/>
</dbReference>
<dbReference type="Reactome" id="R-MMU-418594">
    <property type="pathway name" value="G alpha (i) signalling events"/>
</dbReference>
<dbReference type="Reactome" id="R-MMU-9009391">
    <property type="pathway name" value="Extra-nuclear estrogen signaling"/>
</dbReference>
<dbReference type="BioGRID-ORCS" id="14677">
    <property type="hits" value="0 hits in 79 CRISPR screens"/>
</dbReference>
<dbReference type="CD-CODE" id="CE726F99">
    <property type="entry name" value="Postsynaptic density"/>
</dbReference>
<dbReference type="ChiTaRS" id="Gnai1">
    <property type="organism name" value="mouse"/>
</dbReference>
<dbReference type="PRO" id="PR:B2RSH2"/>
<dbReference type="Proteomes" id="UP000000589">
    <property type="component" value="Chromosome 5"/>
</dbReference>
<dbReference type="RNAct" id="B2RSH2">
    <property type="molecule type" value="protein"/>
</dbReference>
<dbReference type="Bgee" id="ENSMUSG00000057614">
    <property type="expression patterns" value="Expressed in substantia nigra and 249 other cell types or tissues"/>
</dbReference>
<dbReference type="GO" id="GO:0005938">
    <property type="term" value="C:cell cortex"/>
    <property type="evidence" value="ECO:0000250"/>
    <property type="project" value="UniProtKB"/>
</dbReference>
<dbReference type="GO" id="GO:0034451">
    <property type="term" value="C:centriolar satellite"/>
    <property type="evidence" value="ECO:0007669"/>
    <property type="project" value="Ensembl"/>
</dbReference>
<dbReference type="GO" id="GO:0005813">
    <property type="term" value="C:centrosome"/>
    <property type="evidence" value="ECO:0000250"/>
    <property type="project" value="UniProtKB"/>
</dbReference>
<dbReference type="GO" id="GO:0036064">
    <property type="term" value="C:ciliary basal body"/>
    <property type="evidence" value="ECO:0007669"/>
    <property type="project" value="Ensembl"/>
</dbReference>
<dbReference type="GO" id="GO:0005737">
    <property type="term" value="C:cytoplasm"/>
    <property type="evidence" value="ECO:0000250"/>
    <property type="project" value="UniProtKB"/>
</dbReference>
<dbReference type="GO" id="GO:0005829">
    <property type="term" value="C:cytosol"/>
    <property type="evidence" value="ECO:0007669"/>
    <property type="project" value="Ensembl"/>
</dbReference>
<dbReference type="GO" id="GO:0005794">
    <property type="term" value="C:Golgi apparatus"/>
    <property type="evidence" value="ECO:0007669"/>
    <property type="project" value="Ensembl"/>
</dbReference>
<dbReference type="GO" id="GO:0005834">
    <property type="term" value="C:heterotrimeric G-protein complex"/>
    <property type="evidence" value="ECO:0007669"/>
    <property type="project" value="Ensembl"/>
</dbReference>
<dbReference type="GO" id="GO:0030496">
    <property type="term" value="C:midbody"/>
    <property type="evidence" value="ECO:0000250"/>
    <property type="project" value="UniProtKB"/>
</dbReference>
<dbReference type="GO" id="GO:0005730">
    <property type="term" value="C:nucleolus"/>
    <property type="evidence" value="ECO:0007669"/>
    <property type="project" value="Ensembl"/>
</dbReference>
<dbReference type="GO" id="GO:0005654">
    <property type="term" value="C:nucleoplasm"/>
    <property type="evidence" value="ECO:0007669"/>
    <property type="project" value="Ensembl"/>
</dbReference>
<dbReference type="GO" id="GO:0005886">
    <property type="term" value="C:plasma membrane"/>
    <property type="evidence" value="ECO:0000314"/>
    <property type="project" value="MGI"/>
</dbReference>
<dbReference type="GO" id="GO:0010855">
    <property type="term" value="F:adenylate cyclase inhibitor activity"/>
    <property type="evidence" value="ECO:0000315"/>
    <property type="project" value="MGI"/>
</dbReference>
<dbReference type="GO" id="GO:0031749">
    <property type="term" value="F:D2 dopamine receptor binding"/>
    <property type="evidence" value="ECO:0007669"/>
    <property type="project" value="Ensembl"/>
</dbReference>
<dbReference type="GO" id="GO:0003925">
    <property type="term" value="F:G protein activity"/>
    <property type="evidence" value="ECO:0007669"/>
    <property type="project" value="Ensembl"/>
</dbReference>
<dbReference type="GO" id="GO:0001664">
    <property type="term" value="F:G protein-coupled receptor binding"/>
    <property type="evidence" value="ECO:0000250"/>
    <property type="project" value="UniProtKB"/>
</dbReference>
<dbReference type="GO" id="GO:0031683">
    <property type="term" value="F:G-protein beta/gamma-subunit complex binding"/>
    <property type="evidence" value="ECO:0007669"/>
    <property type="project" value="InterPro"/>
</dbReference>
<dbReference type="GO" id="GO:0019003">
    <property type="term" value="F:GDP binding"/>
    <property type="evidence" value="ECO:0000250"/>
    <property type="project" value="UniProtKB"/>
</dbReference>
<dbReference type="GO" id="GO:0005525">
    <property type="term" value="F:GTP binding"/>
    <property type="evidence" value="ECO:0000250"/>
    <property type="project" value="UniProtKB"/>
</dbReference>
<dbReference type="GO" id="GO:0003924">
    <property type="term" value="F:GTPase activity"/>
    <property type="evidence" value="ECO:0000250"/>
    <property type="project" value="UniProtKB"/>
</dbReference>
<dbReference type="GO" id="GO:0000287">
    <property type="term" value="F:magnesium ion binding"/>
    <property type="evidence" value="ECO:0000250"/>
    <property type="project" value="UniProtKB"/>
</dbReference>
<dbReference type="GO" id="GO:0007198">
    <property type="term" value="P:adenylate cyclase-inhibiting serotonin receptor signaling pathway"/>
    <property type="evidence" value="ECO:0007669"/>
    <property type="project" value="Ensembl"/>
</dbReference>
<dbReference type="GO" id="GO:0007188">
    <property type="term" value="P:adenylate cyclase-modulating G protein-coupled receptor signaling pathway"/>
    <property type="evidence" value="ECO:0000250"/>
    <property type="project" value="UniProtKB"/>
</dbReference>
<dbReference type="GO" id="GO:0051301">
    <property type="term" value="P:cell division"/>
    <property type="evidence" value="ECO:0000250"/>
    <property type="project" value="UniProtKB"/>
</dbReference>
<dbReference type="GO" id="GO:1904322">
    <property type="term" value="P:cellular response to forskolin"/>
    <property type="evidence" value="ECO:0000250"/>
    <property type="project" value="UniProtKB"/>
</dbReference>
<dbReference type="GO" id="GO:0007186">
    <property type="term" value="P:G protein-coupled receptor signaling pathway"/>
    <property type="evidence" value="ECO:0000315"/>
    <property type="project" value="MGI"/>
</dbReference>
<dbReference type="GO" id="GO:0046676">
    <property type="term" value="P:negative regulation of insulin secretion"/>
    <property type="evidence" value="ECO:0000315"/>
    <property type="project" value="MGI"/>
</dbReference>
<dbReference type="GO" id="GO:0045542">
    <property type="term" value="P:positive regulation of cholesterol biosynthetic process"/>
    <property type="evidence" value="ECO:0007669"/>
    <property type="project" value="Ensembl"/>
</dbReference>
<dbReference type="GO" id="GO:1904778">
    <property type="term" value="P:positive regulation of protein localization to cell cortex"/>
    <property type="evidence" value="ECO:0000250"/>
    <property type="project" value="UniProtKB"/>
</dbReference>
<dbReference type="GO" id="GO:0060236">
    <property type="term" value="P:regulation of mitotic spindle organization"/>
    <property type="evidence" value="ECO:0000250"/>
    <property type="project" value="UniProtKB"/>
</dbReference>
<dbReference type="GO" id="GO:0034695">
    <property type="term" value="P:response to prostaglandin E"/>
    <property type="evidence" value="ECO:0007669"/>
    <property type="project" value="Ensembl"/>
</dbReference>
<dbReference type="GO" id="GO:0072678">
    <property type="term" value="P:T cell migration"/>
    <property type="evidence" value="ECO:0007669"/>
    <property type="project" value="Ensembl"/>
</dbReference>
<dbReference type="CDD" id="cd00066">
    <property type="entry name" value="G-alpha"/>
    <property type="match status" value="1"/>
</dbReference>
<dbReference type="FunFam" id="1.10.400.10:FF:000001">
    <property type="entry name" value="Guanine nucleotide-binding protein G(I) subunit alpha"/>
    <property type="match status" value="1"/>
</dbReference>
<dbReference type="FunFam" id="3.40.50.300:FF:002487">
    <property type="entry name" value="Guanine nucleotide-binding protein G(i) subunit alpha-1"/>
    <property type="match status" value="1"/>
</dbReference>
<dbReference type="FunFam" id="3.40.50.300:FF:003559">
    <property type="entry name" value="Guanine nucleotide-binding protein G(i) subunit alpha-1"/>
    <property type="match status" value="1"/>
</dbReference>
<dbReference type="Gene3D" id="1.10.400.10">
    <property type="entry name" value="GI Alpha 1, domain 2-like"/>
    <property type="match status" value="1"/>
</dbReference>
<dbReference type="Gene3D" id="3.40.50.300">
    <property type="entry name" value="P-loop containing nucleotide triphosphate hydrolases"/>
    <property type="match status" value="1"/>
</dbReference>
<dbReference type="InterPro" id="IPR001408">
    <property type="entry name" value="Gprotein_alpha_I"/>
</dbReference>
<dbReference type="InterPro" id="IPR001019">
    <property type="entry name" value="Gprotein_alpha_su"/>
</dbReference>
<dbReference type="InterPro" id="IPR011025">
    <property type="entry name" value="GproteinA_insert"/>
</dbReference>
<dbReference type="InterPro" id="IPR027417">
    <property type="entry name" value="P-loop_NTPase"/>
</dbReference>
<dbReference type="PANTHER" id="PTHR10218">
    <property type="entry name" value="GTP-BINDING PROTEIN ALPHA SUBUNIT"/>
    <property type="match status" value="1"/>
</dbReference>
<dbReference type="PANTHER" id="PTHR10218:SF359">
    <property type="entry name" value="GUANINE NUCLEOTIDE-BINDING PROTEIN G(I) SUBUNIT ALPHA-1"/>
    <property type="match status" value="1"/>
</dbReference>
<dbReference type="Pfam" id="PF00503">
    <property type="entry name" value="G-alpha"/>
    <property type="match status" value="1"/>
</dbReference>
<dbReference type="PRINTS" id="PR00318">
    <property type="entry name" value="GPROTEINA"/>
</dbReference>
<dbReference type="PRINTS" id="PR00441">
    <property type="entry name" value="GPROTEINAI"/>
</dbReference>
<dbReference type="SMART" id="SM00275">
    <property type="entry name" value="G_alpha"/>
    <property type="match status" value="1"/>
</dbReference>
<dbReference type="SUPFAM" id="SSF52540">
    <property type="entry name" value="P-loop containing nucleoside triphosphate hydrolases"/>
    <property type="match status" value="1"/>
</dbReference>
<dbReference type="SUPFAM" id="SSF47895">
    <property type="entry name" value="Transducin (alpha subunit), insertion domain"/>
    <property type="match status" value="1"/>
</dbReference>
<dbReference type="PROSITE" id="PS51882">
    <property type="entry name" value="G_ALPHA"/>
    <property type="match status" value="1"/>
</dbReference>
<reference key="1">
    <citation type="journal article" date="2004" name="Genome Res.">
        <title>The status, quality, and expansion of the NIH full-length cDNA project: the Mammalian Gene Collection (MGC).</title>
        <authorList>
            <consortium name="The MGC Project Team"/>
        </authorList>
    </citation>
    <scope>NUCLEOTIDE SEQUENCE [LARGE SCALE MRNA]</scope>
    <source>
        <tissue>Lung</tissue>
    </source>
</reference>
<reference key="2">
    <citation type="journal article" date="2010" name="Cell">
        <title>A tissue-specific atlas of mouse protein phosphorylation and expression.</title>
        <authorList>
            <person name="Huttlin E.L."/>
            <person name="Jedrychowski M.P."/>
            <person name="Elias J.E."/>
            <person name="Goswami T."/>
            <person name="Rad R."/>
            <person name="Beausoleil S.A."/>
            <person name="Villen J."/>
            <person name="Haas W."/>
            <person name="Sowa M.E."/>
            <person name="Gygi S.P."/>
        </authorList>
    </citation>
    <scope>IDENTIFICATION BY MASS SPECTROMETRY [LARGE SCALE ANALYSIS]</scope>
    <source>
        <tissue>Brain</tissue>
        <tissue>Brown adipose tissue</tissue>
        <tissue>Kidney</tissue>
        <tissue>Lung</tissue>
        <tissue>Pancreas</tissue>
        <tissue>Testis</tissue>
    </source>
</reference>
<feature type="initiator methionine" description="Removed" evidence="2">
    <location>
        <position position="1"/>
    </location>
</feature>
<feature type="chain" id="PRO_0000408477" description="Guanine nucleotide-binding protein G(i) subunit alpha-1">
    <location>
        <begin position="2"/>
        <end position="354"/>
    </location>
</feature>
<feature type="domain" description="G-alpha" evidence="3">
    <location>
        <begin position="32"/>
        <end position="354"/>
    </location>
</feature>
<feature type="region of interest" description="G1 motif" evidence="3">
    <location>
        <begin position="35"/>
        <end position="48"/>
    </location>
</feature>
<feature type="region of interest" description="G2 motif" evidence="3">
    <location>
        <begin position="173"/>
        <end position="181"/>
    </location>
</feature>
<feature type="region of interest" description="G3 motif" evidence="3">
    <location>
        <begin position="196"/>
        <end position="205"/>
    </location>
</feature>
<feature type="region of interest" description="G4 motif" evidence="3">
    <location>
        <begin position="265"/>
        <end position="272"/>
    </location>
</feature>
<feature type="region of interest" description="G5 motif" evidence="3">
    <location>
        <begin position="324"/>
        <end position="329"/>
    </location>
</feature>
<feature type="binding site" evidence="1">
    <location>
        <begin position="43"/>
        <end position="48"/>
    </location>
    <ligand>
        <name>GTP</name>
        <dbReference type="ChEBI" id="CHEBI:37565"/>
    </ligand>
</feature>
<feature type="binding site" evidence="1">
    <location>
        <position position="47"/>
    </location>
    <ligand>
        <name>Mg(2+)</name>
        <dbReference type="ChEBI" id="CHEBI:18420"/>
    </ligand>
</feature>
<feature type="binding site" evidence="1">
    <location>
        <begin position="150"/>
        <end position="151"/>
    </location>
    <ligand>
        <name>GTP</name>
        <dbReference type="ChEBI" id="CHEBI:37565"/>
    </ligand>
</feature>
<feature type="binding site" evidence="1">
    <location>
        <begin position="175"/>
        <end position="178"/>
    </location>
    <ligand>
        <name>GTP</name>
        <dbReference type="ChEBI" id="CHEBI:37565"/>
    </ligand>
</feature>
<feature type="binding site" evidence="1">
    <location>
        <position position="181"/>
    </location>
    <ligand>
        <name>Mg(2+)</name>
        <dbReference type="ChEBI" id="CHEBI:18420"/>
    </ligand>
</feature>
<feature type="binding site" evidence="1">
    <location>
        <begin position="200"/>
        <end position="204"/>
    </location>
    <ligand>
        <name>GTP</name>
        <dbReference type="ChEBI" id="CHEBI:37565"/>
    </ligand>
</feature>
<feature type="binding site" evidence="1">
    <location>
        <begin position="269"/>
        <end position="272"/>
    </location>
    <ligand>
        <name>GTP</name>
        <dbReference type="ChEBI" id="CHEBI:37565"/>
    </ligand>
</feature>
<feature type="binding site" evidence="1">
    <location>
        <position position="326"/>
    </location>
    <ligand>
        <name>GTP</name>
        <dbReference type="ChEBI" id="CHEBI:37565"/>
    </ligand>
</feature>
<feature type="lipid moiety-binding region" description="N-myristoyl glycine" evidence="2">
    <location>
        <position position="2"/>
    </location>
</feature>
<feature type="lipid moiety-binding region" description="S-palmitoyl cysteine" evidence="1">
    <location>
        <position position="3"/>
    </location>
</feature>
<feature type="helix" evidence="5">
    <location>
        <begin position="7"/>
        <end position="31"/>
    </location>
</feature>
<feature type="strand" evidence="5">
    <location>
        <begin position="33"/>
        <end position="39"/>
    </location>
</feature>
<feature type="helix" evidence="5">
    <location>
        <begin position="46"/>
        <end position="54"/>
    </location>
</feature>
<feature type="strand" evidence="5">
    <location>
        <begin position="185"/>
        <end position="191"/>
    </location>
</feature>
<feature type="strand" evidence="5">
    <location>
        <begin position="194"/>
        <end position="200"/>
    </location>
</feature>
<feature type="helix" evidence="5">
    <location>
        <begin position="208"/>
        <end position="210"/>
    </location>
</feature>
<feature type="helix" evidence="5">
    <location>
        <begin position="212"/>
        <end position="215"/>
    </location>
</feature>
<feature type="strand" evidence="5">
    <location>
        <begin position="219"/>
        <end position="226"/>
    </location>
</feature>
<feature type="helix" evidence="5">
    <location>
        <begin position="227"/>
        <end position="230"/>
    </location>
</feature>
<feature type="strand" evidence="5">
    <location>
        <begin position="235"/>
        <end position="237"/>
    </location>
</feature>
<feature type="helix" evidence="5">
    <location>
        <begin position="242"/>
        <end position="254"/>
    </location>
</feature>
<feature type="strand" evidence="5">
    <location>
        <begin position="263"/>
        <end position="269"/>
    </location>
</feature>
<feature type="helix" evidence="5">
    <location>
        <begin position="271"/>
        <end position="280"/>
    </location>
</feature>
<feature type="helix" evidence="5">
    <location>
        <begin position="283"/>
        <end position="285"/>
    </location>
</feature>
<feature type="helix" evidence="5">
    <location>
        <begin position="296"/>
        <end position="308"/>
    </location>
</feature>
<feature type="turn" evidence="5">
    <location>
        <begin position="314"/>
        <end position="316"/>
    </location>
</feature>
<feature type="strand" evidence="5">
    <location>
        <begin position="319"/>
        <end position="323"/>
    </location>
</feature>
<feature type="strand" evidence="5">
    <location>
        <begin position="327"/>
        <end position="329"/>
    </location>
</feature>
<feature type="helix" evidence="5">
    <location>
        <begin position="330"/>
        <end position="350"/>
    </location>
</feature>
<organism>
    <name type="scientific">Mus musculus</name>
    <name type="common">Mouse</name>
    <dbReference type="NCBI Taxonomy" id="10090"/>
    <lineage>
        <taxon>Eukaryota</taxon>
        <taxon>Metazoa</taxon>
        <taxon>Chordata</taxon>
        <taxon>Craniata</taxon>
        <taxon>Vertebrata</taxon>
        <taxon>Euteleostomi</taxon>
        <taxon>Mammalia</taxon>
        <taxon>Eutheria</taxon>
        <taxon>Euarchontoglires</taxon>
        <taxon>Glires</taxon>
        <taxon>Rodentia</taxon>
        <taxon>Myomorpha</taxon>
        <taxon>Muroidea</taxon>
        <taxon>Muridae</taxon>
        <taxon>Murinae</taxon>
        <taxon>Mus</taxon>
        <taxon>Mus</taxon>
    </lineage>
</organism>
<proteinExistence type="evidence at protein level"/>
<accession>B2RSH2</accession>
<comment type="function">
    <text evidence="1 2">Guanine nucleotide-binding proteins (G proteins) function as transducers downstream of G protein-coupled receptors (GPCRs) in numerous signaling cascades. The alpha chain contains the guanine nucleotide binding site and alternates between an active, GTP-bound state and an inactive, GDP-bound state. Signaling by an activated GPCR promotes GDP release and GTP binding. The alpha subunit has a low GTPase activity that converts bound GTP to GDP, thereby terminating the signal. Both GDP release and GTP hydrolysis are modulated by numerous regulatory proteins (By similarity). Signaling is mediated via effector proteins, such as adenylate cyclase. Inhibits adenylate cyclase activity of ADCY1, ADCY5 and ADCY6, leading to decreased intracellular cAMP levels (By similarity). The inactive GDP-bound form prevents the association of RGS14 with centrosomes and is required for the translocation of RGS14 from the cytoplasm to the plasma membrane. Required for normal cytokinesis during mitosis. Required for cortical dynein-dynactin complex recruitment during metaphase (By similarity).</text>
</comment>
<comment type="catalytic activity">
    <reaction evidence="2">
        <text>GTP + H2O = GDP + phosphate + H(+)</text>
        <dbReference type="Rhea" id="RHEA:19669"/>
        <dbReference type="ChEBI" id="CHEBI:15377"/>
        <dbReference type="ChEBI" id="CHEBI:15378"/>
        <dbReference type="ChEBI" id="CHEBI:37565"/>
        <dbReference type="ChEBI" id="CHEBI:43474"/>
        <dbReference type="ChEBI" id="CHEBI:58189"/>
    </reaction>
    <physiologicalReaction direction="left-to-right" evidence="2">
        <dbReference type="Rhea" id="RHEA:19670"/>
    </physiologicalReaction>
</comment>
<comment type="subunit">
    <text evidence="1 2">Heterotrimeric G proteins are composed of 3 units; alpha, beta and gamma. The alpha chain contains the guanine nucleotide binding site. Part of a spindle orientation complex at least composed of GNAI1, GPSM2 and NUMA1. Identified in complex with the beta subunit GNB1 and the gamma subunit GNG1. Identified in complex with the beta subunit GNB1 and the gamma subunit GNG2. Component of the TAS2R14-GNAI1 complex, consisting of TAS2R14, GNAI1, GNB1 and GNG2; within the complex interacts with TAS2R14; this complex plays a role in the perception of bitterness (By similarity). GTP binding causes dissociation of the heterotrimer, liberating the individual subunits so that they can interact with downstream effector proteins (By similarity). Interacts (GDP-bound form) with GPSM1; this inhibits guanine nucleotide exchange and GTP binding (By similarity). Interacts (GDP-bound form) with GPSM2 (via GoLoco domains); this inhibits guanine nucleotide exchange. Interacts with RGS10; this strongly enhances GTP hydrolysis. Interacts with RGS1 and RGS16; this strongly enhances GTPase activity. Interacts with RGS4. Interacts with RGS12. Interacts (via active GTP- or inactive GDP-bound forms) with RGS14 (via RGS and GoLoco domains). Interacts with RGS3, RGS6, RGS7, RGS8, RGS17, RGS18 and RGS20 (in vitro) (By similarity). Interacts (GDP-bound form) with RIC8A (via C-terminus); promoting GNAI1 folding and association with the plasma membrane. Interacts (inactive GDP-bound form) with NUCB1 (via GBA motif); the interaction leads to activation of GNAI1 (By similarity). Interacts (inactive GDP-bound form) with CCDC88C/DAPLE (via GBA motif); the interaction leads to activation of GNAI1 (By similarity). Interacts (inactive GDP-bound form) with CCDC8A/GIV (via GBA motif) (By similarity). Interacts with GPR15 (By similarity).</text>
</comment>
<comment type="subcellular location">
    <subcellularLocation>
        <location evidence="1">Nucleus</location>
    </subcellularLocation>
    <subcellularLocation>
        <location evidence="1">Cytoplasm</location>
    </subcellularLocation>
    <subcellularLocation>
        <location evidence="1">Cell membrane</location>
        <topology evidence="1">Peripheral membrane protein</topology>
        <orientation evidence="1">Cytoplasmic side</orientation>
    </subcellularLocation>
    <subcellularLocation>
        <location evidence="1">Cytoplasm</location>
        <location evidence="1">Cytoskeleton</location>
        <location evidence="1">Microtubule organizing center</location>
        <location evidence="1">Centrosome</location>
    </subcellularLocation>
    <subcellularLocation>
        <location evidence="2">Cytoplasm</location>
        <location evidence="2">Cell cortex</location>
    </subcellularLocation>
    <subcellularLocation>
        <location evidence="1">Membrane</location>
        <topology evidence="1">Lipid-anchor</topology>
    </subcellularLocation>
    <text evidence="1">Localizes in the centrosomes of interphase and mitotic cells, but not in centrosomes during cytokinesis. Detected at the cleavage furrow or the midbody. Localized at the plasma membrane throughout mitosis. Colocalizes with RIC8A and RGS14 at the plasma membrane.</text>
</comment>
<comment type="PTM">
    <text evidence="1">Myristoylation at Gly-2 is required for membrane anchoring before palmitoylation.</text>
</comment>
<comment type="PTM">
    <text evidence="1">Palmitoylation at Cys-3 varies with membrane lipid composition.</text>
</comment>
<comment type="similarity">
    <text evidence="4">Belongs to the G-alpha family. G(i/o/t/z) subfamily.</text>
</comment>
<sequence length="354" mass="40361">MGCTLSAEDKAAVERSKMIDRNLREDGEKAAREVKLLLLGAGESGKSTIVKQMKIIHEAGYSEEECKQYKAVVYSNTIQSIIAIIRAMGRLKIDFGDSARADDARQLFVLAGAAEEGFMTAELAGVIKRLWKDSGVQACFNRSREYQLNDSAAYYLNDLDRIAQPNYIPTQQDVLRTRVKTTGIVETHFTFKDLHFKMFDVGGQRSERKKWIHCFEGVTAIIFCVALSDYDLVLAEDEEMNRMHESMKLFDSICNNKWFTDTSIILFLNKKDLFEEKIKKSPLTICYPEYAGSNTYEEAAAYIQCQFEDLNKRKDTKEIYTHFTCATDTKNVQFVFDAVTDVIIKNNLKDCGLF</sequence>